<accession>Q57696</accession>
<evidence type="ECO:0000250" key="1"/>
<evidence type="ECO:0000255" key="2">
    <source>
        <dbReference type="PROSITE-ProRule" id="PRU00515"/>
    </source>
</evidence>
<evidence type="ECO:0000269" key="3">
    <source>
    </source>
</evidence>
<evidence type="ECO:0007829" key="4">
    <source>
        <dbReference type="PDB" id="2GTV"/>
    </source>
</evidence>
<proteinExistence type="evidence at protein level"/>
<gene>
    <name type="primary">aroQ</name>
    <name type="synonym">aroQ(f)</name>
    <name type="ordered locus">MJ0246</name>
</gene>
<reference key="1">
    <citation type="journal article" date="1996" name="Science">
        <title>Complete genome sequence of the methanogenic archaeon, Methanococcus jannaschii.</title>
        <authorList>
            <person name="Bult C.J."/>
            <person name="White O."/>
            <person name="Olsen G.J."/>
            <person name="Zhou L."/>
            <person name="Fleischmann R.D."/>
            <person name="Sutton G.G."/>
            <person name="Blake J.A."/>
            <person name="FitzGerald L.M."/>
            <person name="Clayton R.A."/>
            <person name="Gocayne J.D."/>
            <person name="Kerlavage A.R."/>
            <person name="Dougherty B.A."/>
            <person name="Tomb J.-F."/>
            <person name="Adams M.D."/>
            <person name="Reich C.I."/>
            <person name="Overbeek R."/>
            <person name="Kirkness E.F."/>
            <person name="Weinstock K.G."/>
            <person name="Merrick J.M."/>
            <person name="Glodek A."/>
            <person name="Scott J.L."/>
            <person name="Geoghagen N.S.M."/>
            <person name="Weidman J.F."/>
            <person name="Fuhrmann J.L."/>
            <person name="Nguyen D."/>
            <person name="Utterback T.R."/>
            <person name="Kelley J.M."/>
            <person name="Peterson J.D."/>
            <person name="Sadow P.W."/>
            <person name="Hanna M.C."/>
            <person name="Cotton M.D."/>
            <person name="Roberts K.M."/>
            <person name="Hurst M.A."/>
            <person name="Kaine B.P."/>
            <person name="Borodovsky M."/>
            <person name="Klenk H.-P."/>
            <person name="Fraser C.M."/>
            <person name="Smith H.O."/>
            <person name="Woese C.R."/>
            <person name="Venter J.C."/>
        </authorList>
    </citation>
    <scope>NUCLEOTIDE SEQUENCE [LARGE SCALE GENOMIC DNA]</scope>
    <source>
        <strain>ATCC 43067 / DSM 2661 / JAL-1 / JCM 10045 / NBRC 100440</strain>
    </source>
</reference>
<reference key="2">
    <citation type="journal article" date="1998" name="Biochemistry">
        <title>A small, thermostable, and monofunctional chorismate mutase from the archaeon Methanococcus jannaschii.</title>
        <authorList>
            <person name="MacBeath G."/>
            <person name="Kast P."/>
            <person name="Hilvert D."/>
        </authorList>
    </citation>
    <scope>FUNCTION</scope>
    <scope>CATALYTIC ACTIVITY</scope>
    <scope>GENE NAME</scope>
    <scope>BIOPHYSICOCHEMICAL PROPERTIES</scope>
    <scope>SUBUNIT</scope>
    <source>
        <strain>ATCC 43067 / DSM 2661 / JAL-1 / JCM 10045 / NBRC 100440</strain>
    </source>
</reference>
<reference key="3">
    <citation type="journal article" date="2007" name="Nat. Struct. Mol. Biol.">
        <title>Structure and dynamics of a molten globular enzyme.</title>
        <authorList>
            <person name="Pervushin K."/>
            <person name="Vamvaca K."/>
            <person name="Vogeli B."/>
            <person name="Hilvert D."/>
        </authorList>
    </citation>
    <scope>STRUCTURE BY NMR OF 1-93</scope>
    <source>
        <strain>ATCC 43067 / DSM 2661 / JAL-1 / JCM 10045 / NBRC 100440</strain>
    </source>
</reference>
<sequence length="99" mass="11782">MIEKLAEIRKKIDEIDNKILKLIAERNSLAKDVAEIKNQLGIPINDPEREKYIYDRIRKLCKEHNVDENIGIKIFQILIEHNKALQKQYLEETQNKNKK</sequence>
<comment type="function">
    <text evidence="3">Catalyzes the conversion of chorismate into prephenate via a Claisen rearrangement.</text>
</comment>
<comment type="catalytic activity">
    <reaction evidence="3">
        <text>chorismate = prephenate</text>
        <dbReference type="Rhea" id="RHEA:13897"/>
        <dbReference type="ChEBI" id="CHEBI:29748"/>
        <dbReference type="ChEBI" id="CHEBI:29934"/>
        <dbReference type="EC" id="5.4.99.5"/>
    </reaction>
</comment>
<comment type="biophysicochemical properties">
    <kinetics>
        <KM evidence="3">41 uM for chorismate (at 30 degrees Celsius)</KM>
        <text>kcat is 5.7 sec(-1) (at 30 degrees Celsius).</text>
    </kinetics>
    <phDependence>
        <text evidence="3">Activity is independent of pH in the range of pH 5-9.</text>
    </phDependence>
    <temperatureDependence>
        <text evidence="3">Thermostable. The midpoint for its thermal unfolding transition (Tm) is 88 degrees Celsius.</text>
    </temperatureDependence>
</comment>
<comment type="pathway">
    <text>Metabolic intermediate biosynthesis; prephenate biosynthesis; prephenate from chorismate: step 1/1.</text>
</comment>
<comment type="subunit">
    <text evidence="3">Homodimer.</text>
</comment>
<organism>
    <name type="scientific">Methanocaldococcus jannaschii (strain ATCC 43067 / DSM 2661 / JAL-1 / JCM 10045 / NBRC 100440)</name>
    <name type="common">Methanococcus jannaschii</name>
    <dbReference type="NCBI Taxonomy" id="243232"/>
    <lineage>
        <taxon>Archaea</taxon>
        <taxon>Methanobacteriati</taxon>
        <taxon>Methanobacteriota</taxon>
        <taxon>Methanomada group</taxon>
        <taxon>Methanococci</taxon>
        <taxon>Methanococcales</taxon>
        <taxon>Methanocaldococcaceae</taxon>
        <taxon>Methanocaldococcus</taxon>
    </lineage>
</organism>
<name>CHMU_METJA</name>
<keyword id="KW-0002">3D-structure</keyword>
<keyword id="KW-0413">Isomerase</keyword>
<keyword id="KW-1185">Reference proteome</keyword>
<protein>
    <recommendedName>
        <fullName>Chorismate mutase</fullName>
        <shortName>CM</shortName>
        <ecNumber>5.4.99.5</ecNumber>
    </recommendedName>
    <alternativeName>
        <fullName>Monofunctional chorismate mutase AroQ(f)</fullName>
    </alternativeName>
</protein>
<dbReference type="EC" id="5.4.99.5"/>
<dbReference type="EMBL" id="L77117">
    <property type="protein sequence ID" value="AAB98234.1"/>
    <property type="molecule type" value="Genomic_DNA"/>
</dbReference>
<dbReference type="PIR" id="G64330">
    <property type="entry name" value="G64330"/>
</dbReference>
<dbReference type="RefSeq" id="WP_010869744.1">
    <property type="nucleotide sequence ID" value="NC_000909.1"/>
</dbReference>
<dbReference type="PDB" id="2GTV">
    <property type="method" value="NMR"/>
    <property type="chains" value="X=1-93"/>
</dbReference>
<dbReference type="PDBsum" id="2GTV"/>
<dbReference type="SMR" id="Q57696"/>
<dbReference type="FunCoup" id="Q57696">
    <property type="interactions" value="94"/>
</dbReference>
<dbReference type="STRING" id="243232.MJ_0246"/>
<dbReference type="PaxDb" id="243232-MJ_0246"/>
<dbReference type="EnsemblBacteria" id="AAB98234">
    <property type="protein sequence ID" value="AAB98234"/>
    <property type="gene ID" value="MJ_0246"/>
</dbReference>
<dbReference type="GeneID" id="1451100"/>
<dbReference type="KEGG" id="mja:MJ_0246"/>
<dbReference type="eggNOG" id="arCOG02098">
    <property type="taxonomic scope" value="Archaea"/>
</dbReference>
<dbReference type="HOGENOM" id="CLU_131518_4_0_2"/>
<dbReference type="InParanoid" id="Q57696"/>
<dbReference type="OrthoDB" id="64249at2157"/>
<dbReference type="PhylomeDB" id="Q57696"/>
<dbReference type="SABIO-RK" id="Q57696"/>
<dbReference type="UniPathway" id="UPA00120">
    <property type="reaction ID" value="UER00203"/>
</dbReference>
<dbReference type="EvolutionaryTrace" id="Q57696"/>
<dbReference type="Proteomes" id="UP000000805">
    <property type="component" value="Chromosome"/>
</dbReference>
<dbReference type="GO" id="GO:0004106">
    <property type="term" value="F:chorismate mutase activity"/>
    <property type="evidence" value="ECO:0000314"/>
    <property type="project" value="UniProtKB"/>
</dbReference>
<dbReference type="GO" id="GO:0042802">
    <property type="term" value="F:identical protein binding"/>
    <property type="evidence" value="ECO:0000314"/>
    <property type="project" value="UniProtKB"/>
</dbReference>
<dbReference type="GO" id="GO:0046417">
    <property type="term" value="P:chorismate metabolic process"/>
    <property type="evidence" value="ECO:0000314"/>
    <property type="project" value="UniProtKB"/>
</dbReference>
<dbReference type="GO" id="GO:0009697">
    <property type="term" value="P:salicylic acid biosynthetic process"/>
    <property type="evidence" value="ECO:0000318"/>
    <property type="project" value="GO_Central"/>
</dbReference>
<dbReference type="Gene3D" id="1.20.59.10">
    <property type="entry name" value="Chorismate mutase"/>
    <property type="match status" value="1"/>
</dbReference>
<dbReference type="InterPro" id="IPR036263">
    <property type="entry name" value="Chorismate_II_sf"/>
</dbReference>
<dbReference type="InterPro" id="IPR051331">
    <property type="entry name" value="Chorismate_mutase-related"/>
</dbReference>
<dbReference type="InterPro" id="IPR010950">
    <property type="entry name" value="Chorismate_mutase_arc"/>
</dbReference>
<dbReference type="InterPro" id="IPR036979">
    <property type="entry name" value="CM_dom_sf"/>
</dbReference>
<dbReference type="InterPro" id="IPR002701">
    <property type="entry name" value="CM_II_prokaryot"/>
</dbReference>
<dbReference type="NCBIfam" id="TIGR01791">
    <property type="entry name" value="CM_archaeal"/>
    <property type="match status" value="1"/>
</dbReference>
<dbReference type="NCBIfam" id="NF004925">
    <property type="entry name" value="PRK06285.1"/>
    <property type="match status" value="1"/>
</dbReference>
<dbReference type="PANTHER" id="PTHR38041">
    <property type="entry name" value="CHORISMATE MUTASE"/>
    <property type="match status" value="1"/>
</dbReference>
<dbReference type="PANTHER" id="PTHR38041:SF1">
    <property type="entry name" value="CHORISMATE MUTASE"/>
    <property type="match status" value="1"/>
</dbReference>
<dbReference type="Pfam" id="PF01817">
    <property type="entry name" value="CM_2"/>
    <property type="match status" value="1"/>
</dbReference>
<dbReference type="SMART" id="SM00830">
    <property type="entry name" value="CM_2"/>
    <property type="match status" value="1"/>
</dbReference>
<dbReference type="SUPFAM" id="SSF48600">
    <property type="entry name" value="Chorismate mutase II"/>
    <property type="match status" value="1"/>
</dbReference>
<dbReference type="PROSITE" id="PS51168">
    <property type="entry name" value="CHORISMATE_MUT_2"/>
    <property type="match status" value="1"/>
</dbReference>
<feature type="chain" id="PRO_0000119202" description="Chorismate mutase">
    <location>
        <begin position="1"/>
        <end position="99"/>
    </location>
</feature>
<feature type="domain" description="Chorismate mutase" evidence="2">
    <location>
        <begin position="1"/>
        <end position="90"/>
    </location>
</feature>
<feature type="binding site" evidence="1">
    <location>
        <position position="26"/>
    </location>
    <ligand>
        <name>substrate</name>
    </ligand>
</feature>
<feature type="binding site" evidence="1">
    <location>
        <position position="37"/>
    </location>
    <ligand>
        <name>substrate</name>
    </ligand>
</feature>
<feature type="binding site" evidence="1">
    <location>
        <position position="46"/>
    </location>
    <ligand>
        <name>substrate</name>
    </ligand>
</feature>
<feature type="binding site" evidence="1">
    <location>
        <position position="50"/>
    </location>
    <ligand>
        <name>substrate</name>
    </ligand>
</feature>
<feature type="binding site" evidence="1">
    <location>
        <position position="86"/>
    </location>
    <ligand>
        <name>substrate</name>
    </ligand>
</feature>
<feature type="helix" evidence="4">
    <location>
        <begin position="4"/>
        <end position="20"/>
    </location>
</feature>
<feature type="helix" evidence="4">
    <location>
        <begin position="23"/>
        <end position="39"/>
    </location>
</feature>
<feature type="helix" evidence="4">
    <location>
        <begin position="47"/>
        <end position="64"/>
    </location>
</feature>
<feature type="helix" evidence="4">
    <location>
        <begin position="69"/>
        <end position="93"/>
    </location>
</feature>